<organism>
    <name type="scientific">Aeromonas salmonicida (strain A449)</name>
    <dbReference type="NCBI Taxonomy" id="382245"/>
    <lineage>
        <taxon>Bacteria</taxon>
        <taxon>Pseudomonadati</taxon>
        <taxon>Pseudomonadota</taxon>
        <taxon>Gammaproteobacteria</taxon>
        <taxon>Aeromonadales</taxon>
        <taxon>Aeromonadaceae</taxon>
        <taxon>Aeromonas</taxon>
    </lineage>
</organism>
<reference key="1">
    <citation type="journal article" date="2008" name="BMC Genomics">
        <title>The genome of Aeromonas salmonicida subsp. salmonicida A449: insights into the evolution of a fish pathogen.</title>
        <authorList>
            <person name="Reith M.E."/>
            <person name="Singh R.K."/>
            <person name="Curtis B."/>
            <person name="Boyd J.M."/>
            <person name="Bouevitch A."/>
            <person name="Kimball J."/>
            <person name="Munholland J."/>
            <person name="Murphy C."/>
            <person name="Sarty D."/>
            <person name="Williams J."/>
            <person name="Nash J.H."/>
            <person name="Johnson S.C."/>
            <person name="Brown L.L."/>
        </authorList>
    </citation>
    <scope>NUCLEOTIDE SEQUENCE [LARGE SCALE GENOMIC DNA]</scope>
    <source>
        <strain>A449</strain>
    </source>
</reference>
<dbReference type="EMBL" id="CP000644">
    <property type="protein sequence ID" value="ABO88938.1"/>
    <property type="molecule type" value="Genomic_DNA"/>
</dbReference>
<dbReference type="RefSeq" id="WP_005313179.1">
    <property type="nucleotide sequence ID" value="NC_009348.1"/>
</dbReference>
<dbReference type="SMR" id="A4SJ66"/>
<dbReference type="STRING" id="29491.GCA_000820065_01703"/>
<dbReference type="KEGG" id="asa:ASA_0784"/>
<dbReference type="eggNOG" id="COG1489">
    <property type="taxonomic scope" value="Bacteria"/>
</dbReference>
<dbReference type="HOGENOM" id="CLU_052299_2_0_6"/>
<dbReference type="Proteomes" id="UP000000225">
    <property type="component" value="Chromosome"/>
</dbReference>
<dbReference type="GO" id="GO:0003677">
    <property type="term" value="F:DNA binding"/>
    <property type="evidence" value="ECO:0007669"/>
    <property type="project" value="InterPro"/>
</dbReference>
<dbReference type="CDD" id="cd22359">
    <property type="entry name" value="SfsA-like_bacterial"/>
    <property type="match status" value="1"/>
</dbReference>
<dbReference type="FunFam" id="2.40.50.580:FF:000001">
    <property type="entry name" value="Sugar fermentation stimulation protein A"/>
    <property type="match status" value="1"/>
</dbReference>
<dbReference type="FunFam" id="3.40.1350.60:FF:000001">
    <property type="entry name" value="Sugar fermentation stimulation protein A"/>
    <property type="match status" value="1"/>
</dbReference>
<dbReference type="Gene3D" id="2.40.50.580">
    <property type="match status" value="1"/>
</dbReference>
<dbReference type="Gene3D" id="3.40.1350.60">
    <property type="match status" value="1"/>
</dbReference>
<dbReference type="HAMAP" id="MF_00095">
    <property type="entry name" value="SfsA"/>
    <property type="match status" value="1"/>
</dbReference>
<dbReference type="InterPro" id="IPR005224">
    <property type="entry name" value="SfsA"/>
</dbReference>
<dbReference type="InterPro" id="IPR040452">
    <property type="entry name" value="SfsA_C"/>
</dbReference>
<dbReference type="InterPro" id="IPR041465">
    <property type="entry name" value="SfsA_N"/>
</dbReference>
<dbReference type="NCBIfam" id="TIGR00230">
    <property type="entry name" value="sfsA"/>
    <property type="match status" value="1"/>
</dbReference>
<dbReference type="PANTHER" id="PTHR30545">
    <property type="entry name" value="SUGAR FERMENTATION STIMULATION PROTEIN A"/>
    <property type="match status" value="1"/>
</dbReference>
<dbReference type="PANTHER" id="PTHR30545:SF2">
    <property type="entry name" value="SUGAR FERMENTATION STIMULATION PROTEIN A"/>
    <property type="match status" value="1"/>
</dbReference>
<dbReference type="Pfam" id="PF03749">
    <property type="entry name" value="SfsA"/>
    <property type="match status" value="1"/>
</dbReference>
<dbReference type="Pfam" id="PF17746">
    <property type="entry name" value="SfsA_N"/>
    <property type="match status" value="1"/>
</dbReference>
<accession>A4SJ66</accession>
<sequence>MIFDPPLQSGQLISRYKRFLTDVRLDNGEVITIHCANTGAMTGCADPGTRVWYSTSDNPKRKLPHSWEIAESPAGHFICVNTARANQIARELIEQGALAPLTGYARLRTEVKYGEENSRIDLLLEDDGKPDCYIEVKSVTLLDEREQPGMGYFPDAVTARGAKHLRELMVMKAAGHRAVLLFMVLHSGIVRMRPAAHIDPHYSLLIEQAITAGVEILCYRPHVGVQSMVAQDFIPFESCHLLPEGSE</sequence>
<comment type="similarity">
    <text evidence="1">Belongs to the SfsA family.</text>
</comment>
<protein>
    <recommendedName>
        <fullName evidence="1">Sugar fermentation stimulation protein homolog</fullName>
    </recommendedName>
</protein>
<name>SFSA_AERS4</name>
<feature type="chain" id="PRO_1000007965" description="Sugar fermentation stimulation protein homolog">
    <location>
        <begin position="1"/>
        <end position="247"/>
    </location>
</feature>
<proteinExistence type="inferred from homology"/>
<gene>
    <name evidence="1" type="primary">sfsA</name>
    <name type="ordered locus">ASA_0784</name>
</gene>
<evidence type="ECO:0000255" key="1">
    <source>
        <dbReference type="HAMAP-Rule" id="MF_00095"/>
    </source>
</evidence>